<protein>
    <recommendedName>
        <fullName evidence="1">Small ribosomal subunit protein uS14</fullName>
    </recommendedName>
    <alternativeName>
        <fullName evidence="2">30S ribosomal protein S14 type Z</fullName>
    </alternativeName>
</protein>
<keyword id="KW-0479">Metal-binding</keyword>
<keyword id="KW-0687">Ribonucleoprotein</keyword>
<keyword id="KW-0689">Ribosomal protein</keyword>
<keyword id="KW-0694">RNA-binding</keyword>
<keyword id="KW-0699">rRNA-binding</keyword>
<keyword id="KW-0862">Zinc</keyword>
<dbReference type="EMBL" id="AE017243">
    <property type="protein sequence ID" value="AAZ44268.1"/>
    <property type="molecule type" value="Genomic_DNA"/>
</dbReference>
<dbReference type="RefSeq" id="WP_011206038.1">
    <property type="nucleotide sequence ID" value="NC_007295.1"/>
</dbReference>
<dbReference type="SMR" id="Q4AAF3"/>
<dbReference type="GeneID" id="41334480"/>
<dbReference type="KEGG" id="mhj:MHJ_0177"/>
<dbReference type="eggNOG" id="COG0199">
    <property type="taxonomic scope" value="Bacteria"/>
</dbReference>
<dbReference type="HOGENOM" id="CLU_139869_3_0_14"/>
<dbReference type="OrthoDB" id="9810484at2"/>
<dbReference type="Proteomes" id="UP000000548">
    <property type="component" value="Chromosome"/>
</dbReference>
<dbReference type="GO" id="GO:0005737">
    <property type="term" value="C:cytoplasm"/>
    <property type="evidence" value="ECO:0007669"/>
    <property type="project" value="UniProtKB-ARBA"/>
</dbReference>
<dbReference type="GO" id="GO:0015935">
    <property type="term" value="C:small ribosomal subunit"/>
    <property type="evidence" value="ECO:0007669"/>
    <property type="project" value="TreeGrafter"/>
</dbReference>
<dbReference type="GO" id="GO:0019843">
    <property type="term" value="F:rRNA binding"/>
    <property type="evidence" value="ECO:0007669"/>
    <property type="project" value="UniProtKB-UniRule"/>
</dbReference>
<dbReference type="GO" id="GO:0003735">
    <property type="term" value="F:structural constituent of ribosome"/>
    <property type="evidence" value="ECO:0007669"/>
    <property type="project" value="InterPro"/>
</dbReference>
<dbReference type="GO" id="GO:0008270">
    <property type="term" value="F:zinc ion binding"/>
    <property type="evidence" value="ECO:0007669"/>
    <property type="project" value="UniProtKB-UniRule"/>
</dbReference>
<dbReference type="GO" id="GO:0006412">
    <property type="term" value="P:translation"/>
    <property type="evidence" value="ECO:0007669"/>
    <property type="project" value="UniProtKB-UniRule"/>
</dbReference>
<dbReference type="FunFam" id="4.10.830.10:FF:000001">
    <property type="entry name" value="30S ribosomal protein S14 type Z"/>
    <property type="match status" value="1"/>
</dbReference>
<dbReference type="Gene3D" id="4.10.830.10">
    <property type="entry name" value="30s Ribosomal Protein S14, Chain N"/>
    <property type="match status" value="1"/>
</dbReference>
<dbReference type="HAMAP" id="MF_01364_B">
    <property type="entry name" value="Ribosomal_uS14_2_B"/>
    <property type="match status" value="1"/>
</dbReference>
<dbReference type="InterPro" id="IPR001209">
    <property type="entry name" value="Ribosomal_uS14"/>
</dbReference>
<dbReference type="InterPro" id="IPR023053">
    <property type="entry name" value="Ribosomal_uS14_bact"/>
</dbReference>
<dbReference type="InterPro" id="IPR018271">
    <property type="entry name" value="Ribosomal_uS14_CS"/>
</dbReference>
<dbReference type="InterPro" id="IPR043140">
    <property type="entry name" value="Ribosomal_uS14_sf"/>
</dbReference>
<dbReference type="NCBIfam" id="NF005974">
    <property type="entry name" value="PRK08061.1"/>
    <property type="match status" value="1"/>
</dbReference>
<dbReference type="PANTHER" id="PTHR19836">
    <property type="entry name" value="30S RIBOSOMAL PROTEIN S14"/>
    <property type="match status" value="1"/>
</dbReference>
<dbReference type="PANTHER" id="PTHR19836:SF19">
    <property type="entry name" value="SMALL RIBOSOMAL SUBUNIT PROTEIN US14M"/>
    <property type="match status" value="1"/>
</dbReference>
<dbReference type="Pfam" id="PF00253">
    <property type="entry name" value="Ribosomal_S14"/>
    <property type="match status" value="1"/>
</dbReference>
<dbReference type="SUPFAM" id="SSF57716">
    <property type="entry name" value="Glucocorticoid receptor-like (DNA-binding domain)"/>
    <property type="match status" value="1"/>
</dbReference>
<dbReference type="PROSITE" id="PS00527">
    <property type="entry name" value="RIBOSOMAL_S14"/>
    <property type="match status" value="1"/>
</dbReference>
<comment type="function">
    <text evidence="1">Binds 16S rRNA, required for the assembly of 30S particles and may also be responsible for determining the conformation of the 16S rRNA at the A site.</text>
</comment>
<comment type="cofactor">
    <cofactor evidence="1">
        <name>Zn(2+)</name>
        <dbReference type="ChEBI" id="CHEBI:29105"/>
    </cofactor>
    <text evidence="1">Binds 1 zinc ion per subunit.</text>
</comment>
<comment type="subunit">
    <text evidence="1">Part of the 30S ribosomal subunit. Contacts proteins S3 and S10.</text>
</comment>
<comment type="similarity">
    <text evidence="1">Belongs to the universal ribosomal protein uS14 family. Zinc-binding uS14 subfamily.</text>
</comment>
<sequence>MAKTSWKVKANRAPKFKVRAYTRCQLCGRSHSVLRKFRICRICFRVLAHQGRIPGIKKASW</sequence>
<gene>
    <name evidence="1" type="primary">rpsZ</name>
    <name evidence="1" type="synonym">rpsN</name>
    <name type="ordered locus">MHJ_0177</name>
</gene>
<organism>
    <name type="scientific">Mesomycoplasma hyopneumoniae (strain J / ATCC 25934 / NCTC 10110)</name>
    <name type="common">Mycoplasma hyopneumoniae</name>
    <dbReference type="NCBI Taxonomy" id="262719"/>
    <lineage>
        <taxon>Bacteria</taxon>
        <taxon>Bacillati</taxon>
        <taxon>Mycoplasmatota</taxon>
        <taxon>Mycoplasmoidales</taxon>
        <taxon>Metamycoplasmataceae</taxon>
        <taxon>Mesomycoplasma</taxon>
    </lineage>
</organism>
<reference key="1">
    <citation type="journal article" date="2005" name="J. Bacteriol.">
        <title>Swine and poultry pathogens: the complete genome sequences of two strains of Mycoplasma hyopneumoniae and a strain of Mycoplasma synoviae.</title>
        <authorList>
            <person name="Vasconcelos A.T.R."/>
            <person name="Ferreira H.B."/>
            <person name="Bizarro C.V."/>
            <person name="Bonatto S.L."/>
            <person name="Carvalho M.O."/>
            <person name="Pinto P.M."/>
            <person name="Almeida D.F."/>
            <person name="Almeida L.G.P."/>
            <person name="Almeida R."/>
            <person name="Alves-Junior L."/>
            <person name="Assuncao E.N."/>
            <person name="Azevedo V.A.C."/>
            <person name="Bogo M.R."/>
            <person name="Brigido M.M."/>
            <person name="Brocchi M."/>
            <person name="Burity H.A."/>
            <person name="Camargo A.A."/>
            <person name="Camargo S.S."/>
            <person name="Carepo M.S."/>
            <person name="Carraro D.M."/>
            <person name="de Mattos Cascardo J.C."/>
            <person name="Castro L.A."/>
            <person name="Cavalcanti G."/>
            <person name="Chemale G."/>
            <person name="Collevatti R.G."/>
            <person name="Cunha C.W."/>
            <person name="Dallagiovanna B."/>
            <person name="Dambros B.P."/>
            <person name="Dellagostin O.A."/>
            <person name="Falcao C."/>
            <person name="Fantinatti-Garboggini F."/>
            <person name="Felipe M.S.S."/>
            <person name="Fiorentin L."/>
            <person name="Franco G.R."/>
            <person name="Freitas N.S.A."/>
            <person name="Frias D."/>
            <person name="Grangeiro T.B."/>
            <person name="Grisard E.C."/>
            <person name="Guimaraes C.T."/>
            <person name="Hungria M."/>
            <person name="Jardim S.N."/>
            <person name="Krieger M.A."/>
            <person name="Laurino J.P."/>
            <person name="Lima L.F.A."/>
            <person name="Lopes M.I."/>
            <person name="Loreto E.L.S."/>
            <person name="Madeira H.M.F."/>
            <person name="Manfio G.P."/>
            <person name="Maranhao A.Q."/>
            <person name="Martinkovics C.T."/>
            <person name="Medeiros S.R.B."/>
            <person name="Moreira M.A.M."/>
            <person name="Neiva M."/>
            <person name="Ramalho-Neto C.E."/>
            <person name="Nicolas M.F."/>
            <person name="Oliveira S.C."/>
            <person name="Paixao R.F.C."/>
            <person name="Pedrosa F.O."/>
            <person name="Pena S.D.J."/>
            <person name="Pereira M."/>
            <person name="Pereira-Ferrari L."/>
            <person name="Piffer I."/>
            <person name="Pinto L.S."/>
            <person name="Potrich D.P."/>
            <person name="Salim A.C.M."/>
            <person name="Santos F.R."/>
            <person name="Schmitt R."/>
            <person name="Schneider M.P.C."/>
            <person name="Schrank A."/>
            <person name="Schrank I.S."/>
            <person name="Schuck A.F."/>
            <person name="Seuanez H.N."/>
            <person name="Silva D.W."/>
            <person name="Silva R."/>
            <person name="Silva S.C."/>
            <person name="Soares C.M.A."/>
            <person name="Souza K.R.L."/>
            <person name="Souza R.C."/>
            <person name="Staats C.C."/>
            <person name="Steffens M.B.R."/>
            <person name="Teixeira S.M.R."/>
            <person name="Urmenyi T.P."/>
            <person name="Vainstein M.H."/>
            <person name="Zuccherato L.W."/>
            <person name="Simpson A.J.G."/>
            <person name="Zaha A."/>
        </authorList>
    </citation>
    <scope>NUCLEOTIDE SEQUENCE [LARGE SCALE GENOMIC DNA]</scope>
    <source>
        <strain>J / ATCC 25934 / NCTC 10110</strain>
    </source>
</reference>
<evidence type="ECO:0000255" key="1">
    <source>
        <dbReference type="HAMAP-Rule" id="MF_01364"/>
    </source>
</evidence>
<evidence type="ECO:0000305" key="2"/>
<proteinExistence type="inferred from homology"/>
<feature type="chain" id="PRO_0000269120" description="Small ribosomal subunit protein uS14">
    <location>
        <begin position="1"/>
        <end position="61"/>
    </location>
</feature>
<feature type="binding site" evidence="1">
    <location>
        <position position="24"/>
    </location>
    <ligand>
        <name>Zn(2+)</name>
        <dbReference type="ChEBI" id="CHEBI:29105"/>
    </ligand>
</feature>
<feature type="binding site" evidence="1">
    <location>
        <position position="27"/>
    </location>
    <ligand>
        <name>Zn(2+)</name>
        <dbReference type="ChEBI" id="CHEBI:29105"/>
    </ligand>
</feature>
<feature type="binding site" evidence="1">
    <location>
        <position position="40"/>
    </location>
    <ligand>
        <name>Zn(2+)</name>
        <dbReference type="ChEBI" id="CHEBI:29105"/>
    </ligand>
</feature>
<feature type="binding site" evidence="1">
    <location>
        <position position="43"/>
    </location>
    <ligand>
        <name>Zn(2+)</name>
        <dbReference type="ChEBI" id="CHEBI:29105"/>
    </ligand>
</feature>
<accession>Q4AAF3</accession>
<name>RS14Z_MESHJ</name>